<keyword id="KW-1015">Disulfide bond</keyword>
<keyword id="KW-0325">Glycoprotein</keyword>
<keyword id="KW-0372">Hormone</keyword>
<keyword id="KW-0964">Secreted</keyword>
<keyword id="KW-0732">Signal</keyword>
<protein>
    <recommendedName>
        <fullName>Glycoprotein hormones alpha chain</fullName>
    </recommendedName>
    <alternativeName>
        <fullName>Anterior pituitary glycoprotein hormones common subunit alpha</fullName>
    </alternativeName>
    <alternativeName>
        <fullName>Follicle-stimulating hormone alpha chain</fullName>
        <shortName>FSH-alpha</shortName>
    </alternativeName>
    <alternativeName>
        <fullName>Follitropin alpha chain</fullName>
    </alternativeName>
    <alternativeName>
        <fullName>Luteinizing hormone alpha chain</fullName>
        <shortName>LSH-alpha</shortName>
    </alternativeName>
    <alternativeName>
        <fullName>Lutropin alpha chain</fullName>
    </alternativeName>
    <alternativeName>
        <fullName>Thyroid-stimulating hormone alpha chain</fullName>
        <shortName>TSH-alpha</shortName>
    </alternativeName>
    <alternativeName>
        <fullName>Thyrotropin alpha chain</fullName>
    </alternativeName>
</protein>
<name>GLHA_EQUQB</name>
<feature type="signal peptide" evidence="1">
    <location>
        <begin position="1"/>
        <end position="24"/>
    </location>
</feature>
<feature type="chain" id="PRO_0000011638" description="Glycoprotein hormones alpha chain">
    <location>
        <begin position="25"/>
        <end position="120"/>
    </location>
</feature>
<feature type="glycosylation site" description="N-linked (GlcNAc...) asparagine" evidence="2">
    <location>
        <position position="80"/>
    </location>
</feature>
<feature type="glycosylation site" description="N-linked (GlcNAc...) asparagine" evidence="2">
    <location>
        <position position="106"/>
    </location>
</feature>
<feature type="disulfide bond" evidence="2">
    <location>
        <begin position="35"/>
        <end position="59"/>
    </location>
</feature>
<feature type="disulfide bond" evidence="2">
    <location>
        <begin position="38"/>
        <end position="88"/>
    </location>
</feature>
<feature type="disulfide bond" evidence="2">
    <location>
        <begin position="56"/>
        <end position="110"/>
    </location>
</feature>
<feature type="disulfide bond" evidence="2">
    <location>
        <begin position="60"/>
        <end position="112"/>
    </location>
</feature>
<feature type="disulfide bond" evidence="2">
    <location>
        <begin position="87"/>
        <end position="115"/>
    </location>
</feature>
<reference key="1">
    <citation type="journal article" date="1999" name="J. Reprod. Fertil.">
        <title>Cloning, sequencing and functional expression of zebra (Equus burchelli) LH.</title>
        <authorList>
            <person name="Chopineau M."/>
            <person name="Martinat N."/>
            <person name="Pourchet C."/>
            <person name="Stewart F."/>
            <person name="Combarnous Y."/>
            <person name="Guillou F."/>
        </authorList>
    </citation>
    <scope>NUCLEOTIDE SEQUENCE [MRNA]</scope>
</reference>
<evidence type="ECO:0000250" key="1"/>
<evidence type="ECO:0000250" key="2">
    <source>
        <dbReference type="UniProtKB" id="P01215"/>
    </source>
</evidence>
<evidence type="ECO:0000305" key="3"/>
<dbReference type="EMBL" id="Y16326">
    <property type="protein sequence ID" value="CAA76177.1"/>
    <property type="molecule type" value="mRNA"/>
</dbReference>
<dbReference type="SMR" id="O46642"/>
<dbReference type="GlyCosmos" id="O46642">
    <property type="glycosylation" value="2 sites, No reported glycans"/>
</dbReference>
<dbReference type="GO" id="GO:0005615">
    <property type="term" value="C:extracellular space"/>
    <property type="evidence" value="ECO:0000250"/>
    <property type="project" value="UniProtKB"/>
</dbReference>
<dbReference type="GO" id="GO:0016914">
    <property type="term" value="C:follicle-stimulating hormone complex"/>
    <property type="evidence" value="ECO:0000250"/>
    <property type="project" value="UniProtKB"/>
</dbReference>
<dbReference type="GO" id="GO:0016913">
    <property type="term" value="F:follicle-stimulating hormone activity"/>
    <property type="evidence" value="ECO:0000250"/>
    <property type="project" value="UniProtKB"/>
</dbReference>
<dbReference type="GO" id="GO:0007186">
    <property type="term" value="P:G protein-coupled receptor signaling pathway"/>
    <property type="evidence" value="ECO:0000250"/>
    <property type="project" value="UniProtKB"/>
</dbReference>
<dbReference type="GO" id="GO:0010893">
    <property type="term" value="P:positive regulation of steroid biosynthetic process"/>
    <property type="evidence" value="ECO:0000250"/>
    <property type="project" value="UniProtKB"/>
</dbReference>
<dbReference type="GO" id="GO:0010469">
    <property type="term" value="P:regulation of signaling receptor activity"/>
    <property type="evidence" value="ECO:0000250"/>
    <property type="project" value="UniProtKB"/>
</dbReference>
<dbReference type="GO" id="GO:0006590">
    <property type="term" value="P:thyroid hormone generation"/>
    <property type="evidence" value="ECO:0007669"/>
    <property type="project" value="TreeGrafter"/>
</dbReference>
<dbReference type="FunFam" id="2.10.90.10:FF:000011">
    <property type="entry name" value="Glycoprotein hormones alpha chain"/>
    <property type="match status" value="1"/>
</dbReference>
<dbReference type="Gene3D" id="2.10.90.10">
    <property type="entry name" value="Cystine-knot cytokines"/>
    <property type="match status" value="1"/>
</dbReference>
<dbReference type="InterPro" id="IPR029034">
    <property type="entry name" value="Cystine-knot_cytokine"/>
</dbReference>
<dbReference type="InterPro" id="IPR000476">
    <property type="entry name" value="Glyco_hormone"/>
</dbReference>
<dbReference type="PANTHER" id="PTHR11509">
    <property type="entry name" value="GLYCOPROTEIN HORMONE ALPHA CHAIN"/>
    <property type="match status" value="1"/>
</dbReference>
<dbReference type="PANTHER" id="PTHR11509:SF0">
    <property type="entry name" value="GLYCOPROTEIN HORMONES ALPHA CHAIN"/>
    <property type="match status" value="1"/>
</dbReference>
<dbReference type="Pfam" id="PF00236">
    <property type="entry name" value="Hormone_6"/>
    <property type="match status" value="1"/>
</dbReference>
<dbReference type="PRINTS" id="PR00274">
    <property type="entry name" value="GLYCOHORMONE"/>
</dbReference>
<dbReference type="SMART" id="SM00067">
    <property type="entry name" value="GHA"/>
    <property type="match status" value="1"/>
</dbReference>
<dbReference type="SUPFAM" id="SSF57501">
    <property type="entry name" value="Cystine-knot cytokines"/>
    <property type="match status" value="1"/>
</dbReference>
<dbReference type="PROSITE" id="PS00779">
    <property type="entry name" value="GLYCO_HORMONE_ALPHA_1"/>
    <property type="match status" value="1"/>
</dbReference>
<dbReference type="PROSITE" id="PS00780">
    <property type="entry name" value="GLYCO_HORMONE_ALPHA_2"/>
    <property type="match status" value="1"/>
</dbReference>
<dbReference type="PROSITE" id="PS50277">
    <property type="entry name" value="GLYCO_HORMONE_ALPHA_3"/>
    <property type="match status" value="1"/>
</dbReference>
<proteinExistence type="evidence at transcript level"/>
<sequence>MDYYRKHAAVILATLSVFLHILHSFPDGEFTTQDCPECKLKVNKYFSKLGVPIYQCMGCCFSRAYPTPARSRKTMLVPKNITSEATCCVAKAFIRVTLMGNIRLENHTQCYCSTCYHHKI</sequence>
<gene>
    <name type="primary">CGA</name>
</gene>
<organism>
    <name type="scientific">Equus quagga burchellii</name>
    <name type="common">Burchell's zebra</name>
    <name type="synonym">Equus burchelli</name>
    <dbReference type="NCBI Taxonomy" id="89252"/>
    <lineage>
        <taxon>Eukaryota</taxon>
        <taxon>Metazoa</taxon>
        <taxon>Chordata</taxon>
        <taxon>Craniata</taxon>
        <taxon>Vertebrata</taxon>
        <taxon>Euteleostomi</taxon>
        <taxon>Mammalia</taxon>
        <taxon>Eutheria</taxon>
        <taxon>Laurasiatheria</taxon>
        <taxon>Perissodactyla</taxon>
        <taxon>Equidae</taxon>
        <taxon>Equus</taxon>
        <taxon>Equus quagga</taxon>
    </lineage>
</organism>
<comment type="function">
    <text evidence="2">Shared alpha chain of the active heterodimeric glycoprotein hormones thyrotropin/thyroid stimulating hormone/TSH, lutropin/luteinizing hormone/LH and follitropin/follicle stimulating hormone/FSH. These hormones bind specific receptors on target cells that in turn activate downstream signaling pathways.</text>
</comment>
<comment type="subunit">
    <text evidence="2">Heterodimer. The active hormones thyrotropin, lutropin and follitropin are heterodimers composed of CGA, a common alpha chain described here and a unique beta chain which confers their biological specificity to the hormones: TSHB for thyrotropin, LHB for lutropin and FSHB for follitropin.</text>
</comment>
<comment type="subcellular location">
    <subcellularLocation>
        <location evidence="2">Secreted</location>
    </subcellularLocation>
</comment>
<comment type="similarity">
    <text evidence="3">Belongs to the glycoprotein hormones subunit alpha family.</text>
</comment>
<accession>O46642</accession>